<reference key="1">
    <citation type="journal article" date="1991" name="Genetics">
        <title>Molecular analysis of the hot spot region related to length mutations in wheat chloroplast DNAs. I. Nucleotide divergence of genes and intergenic spacer regions located in the hot spot region.</title>
        <authorList>
            <person name="Ogihara Y."/>
            <person name="Terachi T."/>
            <person name="Sasakuma T."/>
        </authorList>
    </citation>
    <scope>NUCLEOTIDE SEQUENCE [GENOMIC DNA]</scope>
    <source>
        <tissue>Seedling</tissue>
    </source>
</reference>
<geneLocation type="chloroplast"/>
<proteinExistence type="inferred from homology"/>
<organism>
    <name type="scientific">Aegilops crassa</name>
    <name type="common">Persian goatgrass</name>
    <name type="synonym">Triticum crassum</name>
    <dbReference type="NCBI Taxonomy" id="4481"/>
    <lineage>
        <taxon>Eukaryota</taxon>
        <taxon>Viridiplantae</taxon>
        <taxon>Streptophyta</taxon>
        <taxon>Embryophyta</taxon>
        <taxon>Tracheophyta</taxon>
        <taxon>Spermatophyta</taxon>
        <taxon>Magnoliopsida</taxon>
        <taxon>Liliopsida</taxon>
        <taxon>Poales</taxon>
        <taxon>Poaceae</taxon>
        <taxon>BOP clade</taxon>
        <taxon>Pooideae</taxon>
        <taxon>Triticodae</taxon>
        <taxon>Triticeae</taxon>
        <taxon>Triticinae</taxon>
        <taxon>Aegilops</taxon>
    </lineage>
</organism>
<comment type="function">
    <text evidence="1">RuBisCO catalyzes two reactions: the carboxylation of D-ribulose 1,5-bisphosphate, the primary event in carbon dioxide fixation, as well as the oxidative fragmentation of the pentose substrate in the photorespiration process. Both reactions occur simultaneously and in competition at the same active site (By similarity).</text>
</comment>
<comment type="catalytic activity">
    <reaction>
        <text>2 (2R)-3-phosphoglycerate + 2 H(+) = D-ribulose 1,5-bisphosphate + CO2 + H2O</text>
        <dbReference type="Rhea" id="RHEA:23124"/>
        <dbReference type="ChEBI" id="CHEBI:15377"/>
        <dbReference type="ChEBI" id="CHEBI:15378"/>
        <dbReference type="ChEBI" id="CHEBI:16526"/>
        <dbReference type="ChEBI" id="CHEBI:57870"/>
        <dbReference type="ChEBI" id="CHEBI:58272"/>
        <dbReference type="EC" id="4.1.1.39"/>
    </reaction>
</comment>
<comment type="catalytic activity">
    <reaction>
        <text>D-ribulose 1,5-bisphosphate + O2 = 2-phosphoglycolate + (2R)-3-phosphoglycerate + 2 H(+)</text>
        <dbReference type="Rhea" id="RHEA:36631"/>
        <dbReference type="ChEBI" id="CHEBI:15378"/>
        <dbReference type="ChEBI" id="CHEBI:15379"/>
        <dbReference type="ChEBI" id="CHEBI:57870"/>
        <dbReference type="ChEBI" id="CHEBI:58033"/>
        <dbReference type="ChEBI" id="CHEBI:58272"/>
    </reaction>
</comment>
<comment type="cofactor">
    <cofactor evidence="1">
        <name>Mg(2+)</name>
        <dbReference type="ChEBI" id="CHEBI:18420"/>
    </cofactor>
    <text evidence="1">Binds 1 Mg(2+) ion per subunit.</text>
</comment>
<comment type="subunit">
    <text evidence="1">Heterohexadecamer of 8 large chains and 8 small chains; disulfide-linked. The disulfide link is formed within the large subunit homodimers (By similarity).</text>
</comment>
<comment type="subcellular location">
    <subcellularLocation>
        <location>Plastid</location>
        <location>Chloroplast</location>
    </subcellularLocation>
</comment>
<comment type="PTM">
    <text evidence="1">The disulfide bond which can form in the large chain dimeric partners within the hexadecamer appears to be associated with oxidative stress and protein turnover.</text>
</comment>
<comment type="miscellaneous">
    <text evidence="1">The basic functional RuBisCO is composed of a large chain homodimer in a 'head-to-tail' conformation. In form I RuBisCO this homodimer is arranged in a barrel-like tetramer with the small subunits forming a tetrameric 'cap' on each end of the 'barrel' (By similarity).</text>
</comment>
<comment type="similarity">
    <text evidence="3">Belongs to the RuBisCO large chain family. Type I subfamily.</text>
</comment>
<sequence>AVAAESSTGTWTTVWTDGLTSLDRYKGRCYHIEPVAGEDNQWICYVAYPLDLFEEGSVTNMFTSIVGNVFGFKALRALRLEDLRIPPTYSKTFQGPPHGIQVERDKLNKYGRPLLGCTIKPKLGLSAKNYGRACYECLRGGLDFTKDDENVNSQPFMRWRDRFVFCAEAIYKSQAETGEIKGHYLNATAGTCEEMIKRAVFARELGVPIVMHDYLTGGFTANTTLRHYCRDNGLLLHIHRAMHAVIDRQKNHGMHFRVLAKALRMSGGDHIHSGTVVGKLEGEREMTLGFVDLLRDDFIEKDRARGIFFTQDWVSMPGVIPVASGGIHVWHMPALTEIFGDDSVLQFGGGTLGHPWGNAPGAAANRVALEACVQARNEGRDLAREGNEIIRAACKWSPELAAACEVWKAIKFEFEPVDTID</sequence>
<protein>
    <recommendedName>
        <fullName>Ribulose bisphosphate carboxylase large chain</fullName>
        <shortName>RuBisCO large subunit</shortName>
        <ecNumber>4.1.1.39</ecNumber>
    </recommendedName>
</protein>
<keyword id="KW-0113">Calvin cycle</keyword>
<keyword id="KW-0120">Carbon dioxide fixation</keyword>
<keyword id="KW-0150">Chloroplast</keyword>
<keyword id="KW-1015">Disulfide bond</keyword>
<keyword id="KW-0456">Lyase</keyword>
<keyword id="KW-0460">Magnesium</keyword>
<keyword id="KW-0479">Metal-binding</keyword>
<keyword id="KW-0503">Monooxygenase</keyword>
<keyword id="KW-0560">Oxidoreductase</keyword>
<keyword id="KW-0601">Photorespiration</keyword>
<keyword id="KW-0602">Photosynthesis</keyword>
<keyword id="KW-0934">Plastid</keyword>
<gene>
    <name type="primary">rbcL</name>
</gene>
<feature type="chain" id="PRO_0000062343" description="Ribulose bisphosphate carboxylase large chain">
    <location>
        <begin position="1" status="less than"/>
        <end position="421"/>
    </location>
</feature>
<feature type="active site" description="Proton acceptor" evidence="1">
    <location>
        <position position="120"/>
    </location>
</feature>
<feature type="active site" description="Proton acceptor" evidence="1">
    <location>
        <position position="239"/>
    </location>
</feature>
<feature type="binding site" description="in homodimeric partner" evidence="1">
    <location>
        <position position="68"/>
    </location>
    <ligand>
        <name>substrate</name>
    </ligand>
</feature>
<feature type="binding site" evidence="1">
    <location>
        <position position="118"/>
    </location>
    <ligand>
        <name>substrate</name>
    </ligand>
</feature>
<feature type="binding site" evidence="1">
    <location>
        <position position="122"/>
    </location>
    <ligand>
        <name>substrate</name>
    </ligand>
</feature>
<feature type="binding site" description="via carbamate group" evidence="2">
    <location>
        <position position="146"/>
    </location>
    <ligand>
        <name>Mg(2+)</name>
        <dbReference type="ChEBI" id="CHEBI:18420"/>
    </ligand>
</feature>
<feature type="binding site" evidence="2">
    <location>
        <position position="148"/>
    </location>
    <ligand>
        <name>Mg(2+)</name>
        <dbReference type="ChEBI" id="CHEBI:18420"/>
    </ligand>
</feature>
<feature type="binding site" evidence="2">
    <location>
        <position position="149"/>
    </location>
    <ligand>
        <name>Mg(2+)</name>
        <dbReference type="ChEBI" id="CHEBI:18420"/>
    </ligand>
</feature>
<feature type="binding site" evidence="1">
    <location>
        <position position="240"/>
    </location>
    <ligand>
        <name>substrate</name>
    </ligand>
</feature>
<feature type="binding site" evidence="1">
    <location>
        <position position="272"/>
    </location>
    <ligand>
        <name>substrate</name>
    </ligand>
</feature>
<feature type="binding site" evidence="1">
    <location>
        <position position="324"/>
    </location>
    <ligand>
        <name>substrate</name>
    </ligand>
</feature>
<feature type="site" description="Transition state stabilizer" evidence="1">
    <location>
        <position position="279"/>
    </location>
</feature>
<feature type="modified residue" description="N6-carboxylysine" evidence="2">
    <location>
        <position position="146"/>
    </location>
</feature>
<feature type="disulfide bond" description="Interchain; in linked form" evidence="1">
    <location>
        <position position="192"/>
    </location>
</feature>
<feature type="non-terminal residue">
    <location>
        <position position="1"/>
    </location>
</feature>
<dbReference type="EC" id="4.1.1.39"/>
<dbReference type="EMBL" id="X62118">
    <property type="protein sequence ID" value="CAA44032.1"/>
    <property type="molecule type" value="Genomic_DNA"/>
</dbReference>
<dbReference type="PIR" id="S21984">
    <property type="entry name" value="S21984"/>
</dbReference>
<dbReference type="SMR" id="P25413"/>
<dbReference type="GO" id="GO:0009507">
    <property type="term" value="C:chloroplast"/>
    <property type="evidence" value="ECO:0007669"/>
    <property type="project" value="UniProtKB-SubCell"/>
</dbReference>
<dbReference type="GO" id="GO:0000287">
    <property type="term" value="F:magnesium ion binding"/>
    <property type="evidence" value="ECO:0007669"/>
    <property type="project" value="InterPro"/>
</dbReference>
<dbReference type="GO" id="GO:0004497">
    <property type="term" value="F:monooxygenase activity"/>
    <property type="evidence" value="ECO:0007669"/>
    <property type="project" value="UniProtKB-KW"/>
</dbReference>
<dbReference type="GO" id="GO:0016984">
    <property type="term" value="F:ribulose-bisphosphate carboxylase activity"/>
    <property type="evidence" value="ECO:0007669"/>
    <property type="project" value="UniProtKB-EC"/>
</dbReference>
<dbReference type="GO" id="GO:0009853">
    <property type="term" value="P:photorespiration"/>
    <property type="evidence" value="ECO:0007669"/>
    <property type="project" value="UniProtKB-KW"/>
</dbReference>
<dbReference type="GO" id="GO:0019253">
    <property type="term" value="P:reductive pentose-phosphate cycle"/>
    <property type="evidence" value="ECO:0007669"/>
    <property type="project" value="UniProtKB-KW"/>
</dbReference>
<dbReference type="CDD" id="cd08212">
    <property type="entry name" value="RuBisCO_large_I"/>
    <property type="match status" value="1"/>
</dbReference>
<dbReference type="FunFam" id="3.20.20.110:FF:000001">
    <property type="entry name" value="Ribulose bisphosphate carboxylase large chain"/>
    <property type="match status" value="1"/>
</dbReference>
<dbReference type="Gene3D" id="3.20.20.110">
    <property type="entry name" value="Ribulose bisphosphate carboxylase, large subunit, C-terminal domain"/>
    <property type="match status" value="1"/>
</dbReference>
<dbReference type="Gene3D" id="3.30.70.150">
    <property type="entry name" value="RuBisCO large subunit, N-terminal domain"/>
    <property type="match status" value="1"/>
</dbReference>
<dbReference type="InterPro" id="IPR033966">
    <property type="entry name" value="RuBisCO"/>
</dbReference>
<dbReference type="InterPro" id="IPR020878">
    <property type="entry name" value="RuBisCo_large_chain_AS"/>
</dbReference>
<dbReference type="InterPro" id="IPR000685">
    <property type="entry name" value="RuBisCO_lsu_C"/>
</dbReference>
<dbReference type="InterPro" id="IPR036376">
    <property type="entry name" value="RuBisCO_lsu_C_sf"/>
</dbReference>
<dbReference type="InterPro" id="IPR017443">
    <property type="entry name" value="RuBisCO_lsu_fd_N"/>
</dbReference>
<dbReference type="InterPro" id="IPR036422">
    <property type="entry name" value="RuBisCO_lsu_N_sf"/>
</dbReference>
<dbReference type="InterPro" id="IPR020888">
    <property type="entry name" value="RuBisCO_lsuI"/>
</dbReference>
<dbReference type="NCBIfam" id="NF003252">
    <property type="entry name" value="PRK04208.1"/>
    <property type="match status" value="1"/>
</dbReference>
<dbReference type="PANTHER" id="PTHR42704">
    <property type="entry name" value="RIBULOSE BISPHOSPHATE CARBOXYLASE"/>
    <property type="match status" value="1"/>
</dbReference>
<dbReference type="PANTHER" id="PTHR42704:SF16">
    <property type="entry name" value="RIBULOSE BISPHOSPHATE CARBOXYLASE LARGE CHAIN"/>
    <property type="match status" value="1"/>
</dbReference>
<dbReference type="Pfam" id="PF00016">
    <property type="entry name" value="RuBisCO_large"/>
    <property type="match status" value="1"/>
</dbReference>
<dbReference type="Pfam" id="PF02788">
    <property type="entry name" value="RuBisCO_large_N"/>
    <property type="match status" value="1"/>
</dbReference>
<dbReference type="SFLD" id="SFLDG01052">
    <property type="entry name" value="RuBisCO"/>
    <property type="match status" value="1"/>
</dbReference>
<dbReference type="SFLD" id="SFLDS00014">
    <property type="entry name" value="RuBisCO"/>
    <property type="match status" value="1"/>
</dbReference>
<dbReference type="SFLD" id="SFLDG00301">
    <property type="entry name" value="RuBisCO-like_proteins"/>
    <property type="match status" value="1"/>
</dbReference>
<dbReference type="SUPFAM" id="SSF51649">
    <property type="entry name" value="RuBisCo, C-terminal domain"/>
    <property type="match status" value="1"/>
</dbReference>
<dbReference type="SUPFAM" id="SSF54966">
    <property type="entry name" value="RuBisCO, large subunit, small (N-terminal) domain"/>
    <property type="match status" value="1"/>
</dbReference>
<dbReference type="PROSITE" id="PS00157">
    <property type="entry name" value="RUBISCO_LARGE"/>
    <property type="match status" value="1"/>
</dbReference>
<accession>P25413</accession>
<evidence type="ECO:0000250" key="1"/>
<evidence type="ECO:0000255" key="2">
    <source>
        <dbReference type="PROSITE-ProRule" id="PRU10114"/>
    </source>
</evidence>
<evidence type="ECO:0000305" key="3"/>
<name>RBL_AEGCR</name>